<evidence type="ECO:0000250" key="1"/>
<evidence type="ECO:0000255" key="2">
    <source>
        <dbReference type="PROSITE-ProRule" id="PRU00108"/>
    </source>
</evidence>
<evidence type="ECO:0000256" key="3">
    <source>
        <dbReference type="SAM" id="MobiDB-lite"/>
    </source>
</evidence>
<evidence type="ECO:0000305" key="4"/>
<sequence>MPASMFSIDNILAARPRCKDSVLPVAPSAAAPVVFPALHGDSLYGASGGASSDYGAFYPRPVAPGGAGLPAAVSGSRLGYNNYFYGQLHVQAAPVGPACCGAVPPLGAQQCSCVPTPPGYEGPGSVLVSPVPHQMLPYMNVGTLSRTELQLLNQLHCRRKRRHRTIFTDEQLEALENLFQETKYPDVGTREQLARKVHLREEKVEVWFKNRRAKWRRQKRSSSEESENAEKWNKTSSSKASPEKREEEGKSDLDSDS</sequence>
<protein>
    <recommendedName>
        <fullName>Homeobox protein goosecoid</fullName>
    </recommendedName>
</protein>
<reference key="1">
    <citation type="submission" date="2006-08" db="EMBL/GenBank/DDBJ databases">
        <title>Positive selection in transcription factor genes on the human lineage.</title>
        <authorList>
            <person name="Nickel G.C."/>
            <person name="Tefft D.L."/>
            <person name="Trevarthen K."/>
            <person name="Funt J."/>
            <person name="Adams M.D."/>
        </authorList>
    </citation>
    <scope>NUCLEOTIDE SEQUENCE [GENOMIC DNA]</scope>
</reference>
<dbReference type="EMBL" id="DQ976489">
    <property type="protein sequence ID" value="ABM46703.1"/>
    <property type="molecule type" value="Genomic_DNA"/>
</dbReference>
<dbReference type="RefSeq" id="XP_004055692.1">
    <property type="nucleotide sequence ID" value="XM_004055644.4"/>
</dbReference>
<dbReference type="BMRB" id="A1YEY5"/>
<dbReference type="SMR" id="A1YEY5"/>
<dbReference type="FunCoup" id="A1YEY5">
    <property type="interactions" value="776"/>
</dbReference>
<dbReference type="STRING" id="9593.ENSGGOP00000007640"/>
<dbReference type="Ensembl" id="ENSGGOT00000007845.3">
    <property type="protein sequence ID" value="ENSGGOP00000007640.2"/>
    <property type="gene ID" value="ENSGGOG00000007819.3"/>
</dbReference>
<dbReference type="GeneID" id="101153454"/>
<dbReference type="KEGG" id="ggo:101153454"/>
<dbReference type="CTD" id="145258"/>
<dbReference type="eggNOG" id="KOG0490">
    <property type="taxonomic scope" value="Eukaryota"/>
</dbReference>
<dbReference type="GeneTree" id="ENSGT00940000160635"/>
<dbReference type="InParanoid" id="A1YEY5"/>
<dbReference type="OMA" id="QCSCVPA"/>
<dbReference type="OrthoDB" id="15169at9604"/>
<dbReference type="Proteomes" id="UP000001519">
    <property type="component" value="Chromosome 14"/>
</dbReference>
<dbReference type="GO" id="GO:0005634">
    <property type="term" value="C:nucleus"/>
    <property type="evidence" value="ECO:0000318"/>
    <property type="project" value="GO_Central"/>
</dbReference>
<dbReference type="GO" id="GO:0005667">
    <property type="term" value="C:transcription regulator complex"/>
    <property type="evidence" value="ECO:0007669"/>
    <property type="project" value="Ensembl"/>
</dbReference>
<dbReference type="GO" id="GO:0000981">
    <property type="term" value="F:DNA-binding transcription factor activity, RNA polymerase II-specific"/>
    <property type="evidence" value="ECO:0000318"/>
    <property type="project" value="GO_Central"/>
</dbReference>
<dbReference type="GO" id="GO:0001227">
    <property type="term" value="F:DNA-binding transcription repressor activity, RNA polymerase II-specific"/>
    <property type="evidence" value="ECO:0007669"/>
    <property type="project" value="Ensembl"/>
</dbReference>
<dbReference type="GO" id="GO:0000978">
    <property type="term" value="F:RNA polymerase II cis-regulatory region sequence-specific DNA binding"/>
    <property type="evidence" value="ECO:0000318"/>
    <property type="project" value="GO_Central"/>
</dbReference>
<dbReference type="GO" id="GO:0061629">
    <property type="term" value="F:RNA polymerase II-specific DNA-binding transcription factor binding"/>
    <property type="evidence" value="ECO:0007669"/>
    <property type="project" value="Ensembl"/>
</dbReference>
<dbReference type="GO" id="GO:0021904">
    <property type="term" value="P:dorsal/ventral neural tube patterning"/>
    <property type="evidence" value="ECO:0007669"/>
    <property type="project" value="Ensembl"/>
</dbReference>
<dbReference type="GO" id="GO:0048704">
    <property type="term" value="P:embryonic skeletal system morphogenesis"/>
    <property type="evidence" value="ECO:0007669"/>
    <property type="project" value="Ensembl"/>
</dbReference>
<dbReference type="GO" id="GO:0030900">
    <property type="term" value="P:forebrain development"/>
    <property type="evidence" value="ECO:0007669"/>
    <property type="project" value="Ensembl"/>
</dbReference>
<dbReference type="GO" id="GO:0042474">
    <property type="term" value="P:middle ear morphogenesis"/>
    <property type="evidence" value="ECO:0000250"/>
    <property type="project" value="UniProtKB"/>
</dbReference>
<dbReference type="GO" id="GO:0048644">
    <property type="term" value="P:muscle organ morphogenesis"/>
    <property type="evidence" value="ECO:0007669"/>
    <property type="project" value="Ensembl"/>
</dbReference>
<dbReference type="GO" id="GO:0030178">
    <property type="term" value="P:negative regulation of Wnt signaling pathway"/>
    <property type="evidence" value="ECO:0007669"/>
    <property type="project" value="Ensembl"/>
</dbReference>
<dbReference type="GO" id="GO:0014036">
    <property type="term" value="P:neural crest cell fate specification"/>
    <property type="evidence" value="ECO:0000250"/>
    <property type="project" value="UniProtKB"/>
</dbReference>
<dbReference type="GO" id="GO:0006357">
    <property type="term" value="P:regulation of transcription by RNA polymerase II"/>
    <property type="evidence" value="ECO:0000318"/>
    <property type="project" value="GO_Central"/>
</dbReference>
<dbReference type="GO" id="GO:0023019">
    <property type="term" value="P:signal transduction involved in regulation of gene expression"/>
    <property type="evidence" value="ECO:0007669"/>
    <property type="project" value="Ensembl"/>
</dbReference>
<dbReference type="GO" id="GO:0016055">
    <property type="term" value="P:Wnt signaling pathway"/>
    <property type="evidence" value="ECO:0007669"/>
    <property type="project" value="Ensembl"/>
</dbReference>
<dbReference type="CDD" id="cd00086">
    <property type="entry name" value="homeodomain"/>
    <property type="match status" value="1"/>
</dbReference>
<dbReference type="FunFam" id="1.10.10.60:FF:000210">
    <property type="entry name" value="homeobox protein goosecoid"/>
    <property type="match status" value="1"/>
</dbReference>
<dbReference type="Gene3D" id="1.10.10.60">
    <property type="entry name" value="Homeodomain-like"/>
    <property type="match status" value="1"/>
</dbReference>
<dbReference type="InterPro" id="IPR051440">
    <property type="entry name" value="Goosecoid-like_HB"/>
</dbReference>
<dbReference type="InterPro" id="IPR001356">
    <property type="entry name" value="HD"/>
</dbReference>
<dbReference type="InterPro" id="IPR017970">
    <property type="entry name" value="Homeobox_CS"/>
</dbReference>
<dbReference type="InterPro" id="IPR009057">
    <property type="entry name" value="Homeodomain-like_sf"/>
</dbReference>
<dbReference type="PANTHER" id="PTHR46643:SF2">
    <property type="entry name" value="HOMEOBOX PROTEIN GOOSECOID"/>
    <property type="match status" value="1"/>
</dbReference>
<dbReference type="PANTHER" id="PTHR46643">
    <property type="entry name" value="HOMEOBOX PROTEIN GOOSECOID-RELATED"/>
    <property type="match status" value="1"/>
</dbReference>
<dbReference type="Pfam" id="PF00046">
    <property type="entry name" value="Homeodomain"/>
    <property type="match status" value="1"/>
</dbReference>
<dbReference type="SMART" id="SM00389">
    <property type="entry name" value="HOX"/>
    <property type="match status" value="1"/>
</dbReference>
<dbReference type="SUPFAM" id="SSF46689">
    <property type="entry name" value="Homeodomain-like"/>
    <property type="match status" value="1"/>
</dbReference>
<dbReference type="PROSITE" id="PS00027">
    <property type="entry name" value="HOMEOBOX_1"/>
    <property type="match status" value="1"/>
</dbReference>
<dbReference type="PROSITE" id="PS50071">
    <property type="entry name" value="HOMEOBOX_2"/>
    <property type="match status" value="1"/>
</dbReference>
<accession>A1YEY5</accession>
<name>GSC_GORGO</name>
<comment type="function">
    <text evidence="1">Regulates chordin (CHRD). May play a role in spatial programing within discrete embryonic fields or lineage compartments during organogenesis. In concert with NKX3-2, plays a role in defining the structural components of the middle ear; required for the development of the entire tympanic ring (By similarity). Probably involved in the regulatory networks that define neural crest cell fate specification and determine mesoderm cell lineages in mammals (By similarity).</text>
</comment>
<comment type="subcellular location">
    <subcellularLocation>
        <location evidence="2">Nucleus</location>
    </subcellularLocation>
</comment>
<comment type="similarity">
    <text evidence="4">Belongs to the paired homeobox family. Bicoid subfamily.</text>
</comment>
<keyword id="KW-0217">Developmental protein</keyword>
<keyword id="KW-0238">DNA-binding</keyword>
<keyword id="KW-0371">Homeobox</keyword>
<keyword id="KW-0539">Nucleus</keyword>
<keyword id="KW-1185">Reference proteome</keyword>
<organism>
    <name type="scientific">Gorilla gorilla gorilla</name>
    <name type="common">Western lowland gorilla</name>
    <dbReference type="NCBI Taxonomy" id="9595"/>
    <lineage>
        <taxon>Eukaryota</taxon>
        <taxon>Metazoa</taxon>
        <taxon>Chordata</taxon>
        <taxon>Craniata</taxon>
        <taxon>Vertebrata</taxon>
        <taxon>Euteleostomi</taxon>
        <taxon>Mammalia</taxon>
        <taxon>Eutheria</taxon>
        <taxon>Euarchontoglires</taxon>
        <taxon>Primates</taxon>
        <taxon>Haplorrhini</taxon>
        <taxon>Catarrhini</taxon>
        <taxon>Hominidae</taxon>
        <taxon>Gorilla</taxon>
    </lineage>
</organism>
<gene>
    <name type="primary">GSC</name>
</gene>
<feature type="chain" id="PRO_0000285442" description="Homeobox protein goosecoid">
    <location>
        <begin position="1"/>
        <end position="257"/>
    </location>
</feature>
<feature type="DNA-binding region" description="Homeobox" evidence="2">
    <location>
        <begin position="160"/>
        <end position="219"/>
    </location>
</feature>
<feature type="region of interest" description="Disordered" evidence="3">
    <location>
        <begin position="213"/>
        <end position="257"/>
    </location>
</feature>
<feature type="compositionally biased region" description="Basic and acidic residues" evidence="3">
    <location>
        <begin position="241"/>
        <end position="257"/>
    </location>
</feature>
<proteinExistence type="inferred from homology"/>